<proteinExistence type="inferred from homology"/>
<feature type="chain" id="PRO_0000187614" description="Uroporphyrinogen decarboxylase">
    <location>
        <begin position="1"/>
        <end position="357"/>
    </location>
</feature>
<feature type="binding site" evidence="1">
    <location>
        <begin position="30"/>
        <end position="34"/>
    </location>
    <ligand>
        <name>substrate</name>
    </ligand>
</feature>
<feature type="binding site" evidence="1">
    <location>
        <position position="79"/>
    </location>
    <ligand>
        <name>substrate</name>
    </ligand>
</feature>
<feature type="binding site" evidence="1">
    <location>
        <position position="154"/>
    </location>
    <ligand>
        <name>substrate</name>
    </ligand>
</feature>
<feature type="binding site" evidence="1">
    <location>
        <position position="209"/>
    </location>
    <ligand>
        <name>substrate</name>
    </ligand>
</feature>
<feature type="binding site" evidence="1">
    <location>
        <position position="336"/>
    </location>
    <ligand>
        <name>substrate</name>
    </ligand>
</feature>
<feature type="site" description="Transition state stabilizer" evidence="1">
    <location>
        <position position="79"/>
    </location>
</feature>
<dbReference type="EC" id="4.1.1.37" evidence="1"/>
<dbReference type="EMBL" id="LT708304">
    <property type="protein sequence ID" value="SIU01315.1"/>
    <property type="molecule type" value="Genomic_DNA"/>
</dbReference>
<dbReference type="RefSeq" id="WP_003413873.1">
    <property type="nucleotide sequence ID" value="NC_002945.4"/>
</dbReference>
<dbReference type="SMR" id="Q7TY47"/>
<dbReference type="GeneID" id="45426666"/>
<dbReference type="KEGG" id="mbo:BQ2027_MB2697C"/>
<dbReference type="PATRIC" id="fig|233413.5.peg.2956"/>
<dbReference type="UniPathway" id="UPA00251">
    <property type="reaction ID" value="UER00321"/>
</dbReference>
<dbReference type="Proteomes" id="UP000001419">
    <property type="component" value="Chromosome"/>
</dbReference>
<dbReference type="GO" id="GO:0005829">
    <property type="term" value="C:cytosol"/>
    <property type="evidence" value="ECO:0007669"/>
    <property type="project" value="TreeGrafter"/>
</dbReference>
<dbReference type="GO" id="GO:0004853">
    <property type="term" value="F:uroporphyrinogen decarboxylase activity"/>
    <property type="evidence" value="ECO:0007669"/>
    <property type="project" value="UniProtKB-UniRule"/>
</dbReference>
<dbReference type="GO" id="GO:0006782">
    <property type="term" value="P:protoporphyrinogen IX biosynthetic process"/>
    <property type="evidence" value="ECO:0007669"/>
    <property type="project" value="UniProtKB-UniRule"/>
</dbReference>
<dbReference type="CDD" id="cd00717">
    <property type="entry name" value="URO-D"/>
    <property type="match status" value="1"/>
</dbReference>
<dbReference type="FunFam" id="3.20.20.210:FF:000007">
    <property type="entry name" value="Uroporphyrinogen decarboxylase"/>
    <property type="match status" value="1"/>
</dbReference>
<dbReference type="Gene3D" id="3.20.20.210">
    <property type="match status" value="1"/>
</dbReference>
<dbReference type="HAMAP" id="MF_00218">
    <property type="entry name" value="URO_D"/>
    <property type="match status" value="1"/>
</dbReference>
<dbReference type="InterPro" id="IPR038071">
    <property type="entry name" value="UROD/MetE-like_sf"/>
</dbReference>
<dbReference type="InterPro" id="IPR006361">
    <property type="entry name" value="Uroporphyrinogen_deCO2ase_HemE"/>
</dbReference>
<dbReference type="InterPro" id="IPR000257">
    <property type="entry name" value="Uroporphyrinogen_deCOase"/>
</dbReference>
<dbReference type="NCBIfam" id="TIGR01464">
    <property type="entry name" value="hemE"/>
    <property type="match status" value="1"/>
</dbReference>
<dbReference type="PANTHER" id="PTHR21091">
    <property type="entry name" value="METHYLTETRAHYDROFOLATE:HOMOCYSTEINE METHYLTRANSFERASE RELATED"/>
    <property type="match status" value="1"/>
</dbReference>
<dbReference type="PANTHER" id="PTHR21091:SF169">
    <property type="entry name" value="UROPORPHYRINOGEN DECARBOXYLASE"/>
    <property type="match status" value="1"/>
</dbReference>
<dbReference type="Pfam" id="PF01208">
    <property type="entry name" value="URO-D"/>
    <property type="match status" value="1"/>
</dbReference>
<dbReference type="SUPFAM" id="SSF51726">
    <property type="entry name" value="UROD/MetE-like"/>
    <property type="match status" value="1"/>
</dbReference>
<dbReference type="PROSITE" id="PS00906">
    <property type="entry name" value="UROD_1"/>
    <property type="match status" value="1"/>
</dbReference>
<dbReference type="PROSITE" id="PS00907">
    <property type="entry name" value="UROD_2"/>
    <property type="match status" value="1"/>
</dbReference>
<reference key="1">
    <citation type="journal article" date="2003" name="Proc. Natl. Acad. Sci. U.S.A.">
        <title>The complete genome sequence of Mycobacterium bovis.</title>
        <authorList>
            <person name="Garnier T."/>
            <person name="Eiglmeier K."/>
            <person name="Camus J.-C."/>
            <person name="Medina N."/>
            <person name="Mansoor H."/>
            <person name="Pryor M."/>
            <person name="Duthoy S."/>
            <person name="Grondin S."/>
            <person name="Lacroix C."/>
            <person name="Monsempe C."/>
            <person name="Simon S."/>
            <person name="Harris B."/>
            <person name="Atkin R."/>
            <person name="Doggett J."/>
            <person name="Mayes R."/>
            <person name="Keating L."/>
            <person name="Wheeler P.R."/>
            <person name="Parkhill J."/>
            <person name="Barrell B.G."/>
            <person name="Cole S.T."/>
            <person name="Gordon S.V."/>
            <person name="Hewinson R.G."/>
        </authorList>
    </citation>
    <scope>NUCLEOTIDE SEQUENCE [LARGE SCALE GENOMIC DNA]</scope>
    <source>
        <strain>ATCC BAA-935 / AF2122/97</strain>
    </source>
</reference>
<reference key="2">
    <citation type="journal article" date="2017" name="Genome Announc.">
        <title>Updated reference genome sequence and annotation of Mycobacterium bovis AF2122/97.</title>
        <authorList>
            <person name="Malone K.M."/>
            <person name="Farrell D."/>
            <person name="Stuber T.P."/>
            <person name="Schubert O.T."/>
            <person name="Aebersold R."/>
            <person name="Robbe-Austerman S."/>
            <person name="Gordon S.V."/>
        </authorList>
    </citation>
    <scope>NUCLEOTIDE SEQUENCE [LARGE SCALE GENOMIC DNA]</scope>
    <scope>GENOME REANNOTATION</scope>
    <source>
        <strain>ATCC BAA-935 / AF2122/97</strain>
    </source>
</reference>
<keyword id="KW-0963">Cytoplasm</keyword>
<keyword id="KW-0210">Decarboxylase</keyword>
<keyword id="KW-0456">Lyase</keyword>
<keyword id="KW-0627">Porphyrin biosynthesis</keyword>
<keyword id="KW-1185">Reference proteome</keyword>
<name>DCUP_MYCBO</name>
<evidence type="ECO:0000255" key="1">
    <source>
        <dbReference type="HAMAP-Rule" id="MF_00218"/>
    </source>
</evidence>
<accession>Q7TY47</accession>
<accession>A0A1R3Y3X2</accession>
<accession>X2BLZ0</accession>
<organism>
    <name type="scientific">Mycobacterium bovis (strain ATCC BAA-935 / AF2122/97)</name>
    <dbReference type="NCBI Taxonomy" id="233413"/>
    <lineage>
        <taxon>Bacteria</taxon>
        <taxon>Bacillati</taxon>
        <taxon>Actinomycetota</taxon>
        <taxon>Actinomycetes</taxon>
        <taxon>Mycobacteriales</taxon>
        <taxon>Mycobacteriaceae</taxon>
        <taxon>Mycobacterium</taxon>
        <taxon>Mycobacterium tuberculosis complex</taxon>
    </lineage>
</organism>
<protein>
    <recommendedName>
        <fullName evidence="1">Uroporphyrinogen decarboxylase</fullName>
        <shortName evidence="1">UPD</shortName>
        <shortName evidence="1">URO-D</shortName>
        <ecNumber evidence="1">4.1.1.37</ecNumber>
    </recommendedName>
</protein>
<comment type="function">
    <text evidence="1">Catalyzes the decarboxylation of four acetate groups of uroporphyrinogen-III to yield coproporphyrinogen-III.</text>
</comment>
<comment type="catalytic activity">
    <reaction evidence="1">
        <text>uroporphyrinogen III + 4 H(+) = coproporphyrinogen III + 4 CO2</text>
        <dbReference type="Rhea" id="RHEA:19865"/>
        <dbReference type="ChEBI" id="CHEBI:15378"/>
        <dbReference type="ChEBI" id="CHEBI:16526"/>
        <dbReference type="ChEBI" id="CHEBI:57308"/>
        <dbReference type="ChEBI" id="CHEBI:57309"/>
        <dbReference type="EC" id="4.1.1.37"/>
    </reaction>
</comment>
<comment type="pathway">
    <text evidence="1">Porphyrin-containing compound metabolism; protoporphyrin-IX biosynthesis; coproporphyrinogen-III from 5-aminolevulinate: step 4/4.</text>
</comment>
<comment type="subunit">
    <text evidence="1">Homodimer.</text>
</comment>
<comment type="subcellular location">
    <subcellularLocation>
        <location evidence="1">Cytoplasm</location>
    </subcellularLocation>
</comment>
<comment type="similarity">
    <text evidence="1">Belongs to the uroporphyrinogen decarboxylase family.</text>
</comment>
<gene>
    <name evidence="1" type="primary">hemE</name>
    <name type="ordered locus">BQ2027_MB2697C</name>
</gene>
<sequence>MSTRRDLPQSPYLAAVTGRKPSRVPVWFMRQAGRSLPEYRALRERYSMLAACFEPDVACEITLQPIRRYDVDAAILFSDIVVPLRAAGVDLDIVADVGPVIADPVRTAADVAAMKPLDPQAIQPVLVAASLLVAELGDVPLIGFAGAPFTLASYLVEGGPSRHHAHVKAMMLAEPASWHALMAKLTDLTIAFLVGQIDAGVDAIQVFDSWAGALSPIDYRQYVLPHSARVFAALGEHGVPMTHFGVGTAELLGAMSEAVTAGERPGRGAVVGVDWRTPLTDAAARVVPGTALQGNLDPAVVLAGWPAVERAARAVVDDGRRAVDAGAAGHIFNLGHGVLPESDPAVLADLVSLVHSL</sequence>